<accession>Q03787</accession>
<accession>D6VSN0</accession>
<organism>
    <name type="scientific">Saccharomyces cerevisiae (strain ATCC 204508 / S288c)</name>
    <name type="common">Baker's yeast</name>
    <dbReference type="NCBI Taxonomy" id="559292"/>
    <lineage>
        <taxon>Eukaryota</taxon>
        <taxon>Fungi</taxon>
        <taxon>Dikarya</taxon>
        <taxon>Ascomycota</taxon>
        <taxon>Saccharomycotina</taxon>
        <taxon>Saccharomycetes</taxon>
        <taxon>Saccharomycetales</taxon>
        <taxon>Saccharomycetaceae</taxon>
        <taxon>Saccharomyces</taxon>
    </lineage>
</organism>
<feature type="chain" id="PRO_0000253841" description="Uncharacterized protein YDR249C">
    <location>
        <begin position="1"/>
        <end position="373"/>
    </location>
</feature>
<keyword id="KW-1185">Reference proteome</keyword>
<name>YD249_YEAST</name>
<dbReference type="EMBL" id="Z49701">
    <property type="protein sequence ID" value="CAA89735.1"/>
    <property type="molecule type" value="Genomic_DNA"/>
</dbReference>
<dbReference type="EMBL" id="BK006938">
    <property type="protein sequence ID" value="DAA12090.1"/>
    <property type="molecule type" value="Genomic_DNA"/>
</dbReference>
<dbReference type="PIR" id="S54545">
    <property type="entry name" value="S54545"/>
</dbReference>
<dbReference type="RefSeq" id="NP_010535.3">
    <property type="nucleotide sequence ID" value="NM_001180557.3"/>
</dbReference>
<dbReference type="BioGRID" id="32300">
    <property type="interactions" value="58"/>
</dbReference>
<dbReference type="DIP" id="DIP-5212N"/>
<dbReference type="FunCoup" id="Q03787">
    <property type="interactions" value="29"/>
</dbReference>
<dbReference type="IntAct" id="Q03787">
    <property type="interactions" value="1"/>
</dbReference>
<dbReference type="STRING" id="4932.YDR249C"/>
<dbReference type="PaxDb" id="4932-YDR249C"/>
<dbReference type="PeptideAtlas" id="Q03787"/>
<dbReference type="EnsemblFungi" id="YDR249C_mRNA">
    <property type="protein sequence ID" value="YDR249C"/>
    <property type="gene ID" value="YDR249C"/>
</dbReference>
<dbReference type="GeneID" id="851836"/>
<dbReference type="KEGG" id="sce:YDR249C"/>
<dbReference type="AGR" id="SGD:S000002657"/>
<dbReference type="SGD" id="S000002657">
    <property type="gene designation" value="YDR249C"/>
</dbReference>
<dbReference type="VEuPathDB" id="FungiDB:YDR249C"/>
<dbReference type="eggNOG" id="ENOG502S7GU">
    <property type="taxonomic scope" value="Eukaryota"/>
</dbReference>
<dbReference type="HOGENOM" id="CLU_064984_0_0_1"/>
<dbReference type="InParanoid" id="Q03787"/>
<dbReference type="OMA" id="INHLFHA"/>
<dbReference type="OrthoDB" id="4038608at2759"/>
<dbReference type="BioCyc" id="YEAST:G3O-29822-MONOMER"/>
<dbReference type="BioGRID-ORCS" id="851836">
    <property type="hits" value="0 hits in 10 CRISPR screens"/>
</dbReference>
<dbReference type="PRO" id="PR:Q03787"/>
<dbReference type="Proteomes" id="UP000002311">
    <property type="component" value="Chromosome IV"/>
</dbReference>
<dbReference type="RNAct" id="Q03787">
    <property type="molecule type" value="protein"/>
</dbReference>
<gene>
    <name type="ordered locus">YDR249C</name>
</gene>
<proteinExistence type="predicted"/>
<reference key="1">
    <citation type="journal article" date="1997" name="Nature">
        <title>The nucleotide sequence of Saccharomyces cerevisiae chromosome IV.</title>
        <authorList>
            <person name="Jacq C."/>
            <person name="Alt-Moerbe J."/>
            <person name="Andre B."/>
            <person name="Arnold W."/>
            <person name="Bahr A."/>
            <person name="Ballesta J.P.G."/>
            <person name="Bargues M."/>
            <person name="Baron L."/>
            <person name="Becker A."/>
            <person name="Biteau N."/>
            <person name="Bloecker H."/>
            <person name="Blugeon C."/>
            <person name="Boskovic J."/>
            <person name="Brandt P."/>
            <person name="Brueckner M."/>
            <person name="Buitrago M.J."/>
            <person name="Coster F."/>
            <person name="Delaveau T."/>
            <person name="del Rey F."/>
            <person name="Dujon B."/>
            <person name="Eide L.G."/>
            <person name="Garcia-Cantalejo J.M."/>
            <person name="Goffeau A."/>
            <person name="Gomez-Peris A."/>
            <person name="Granotier C."/>
            <person name="Hanemann V."/>
            <person name="Hankeln T."/>
            <person name="Hoheisel J.D."/>
            <person name="Jaeger W."/>
            <person name="Jimenez A."/>
            <person name="Jonniaux J.-L."/>
            <person name="Kraemer C."/>
            <person name="Kuester H."/>
            <person name="Laamanen P."/>
            <person name="Legros Y."/>
            <person name="Louis E.J."/>
            <person name="Moeller-Rieker S."/>
            <person name="Monnet A."/>
            <person name="Moro M."/>
            <person name="Mueller-Auer S."/>
            <person name="Nussbaumer B."/>
            <person name="Paricio N."/>
            <person name="Paulin L."/>
            <person name="Perea J."/>
            <person name="Perez-Alonso M."/>
            <person name="Perez-Ortin J.E."/>
            <person name="Pohl T.M."/>
            <person name="Prydz H."/>
            <person name="Purnelle B."/>
            <person name="Rasmussen S.W."/>
            <person name="Remacha M.A."/>
            <person name="Revuelta J.L."/>
            <person name="Rieger M."/>
            <person name="Salom D."/>
            <person name="Saluz H.P."/>
            <person name="Saiz J.E."/>
            <person name="Saren A.-M."/>
            <person name="Schaefer M."/>
            <person name="Scharfe M."/>
            <person name="Schmidt E.R."/>
            <person name="Schneider C."/>
            <person name="Scholler P."/>
            <person name="Schwarz S."/>
            <person name="Soler-Mira A."/>
            <person name="Urrestarazu L.A."/>
            <person name="Verhasselt P."/>
            <person name="Vissers S."/>
            <person name="Voet M."/>
            <person name="Volckaert G."/>
            <person name="Wagner G."/>
            <person name="Wambutt R."/>
            <person name="Wedler E."/>
            <person name="Wedler H."/>
            <person name="Woelfl S."/>
            <person name="Harris D.E."/>
            <person name="Bowman S."/>
            <person name="Brown D."/>
            <person name="Churcher C.M."/>
            <person name="Connor R."/>
            <person name="Dedman K."/>
            <person name="Gentles S."/>
            <person name="Hamlin N."/>
            <person name="Hunt S."/>
            <person name="Jones L."/>
            <person name="McDonald S."/>
            <person name="Murphy L.D."/>
            <person name="Niblett D."/>
            <person name="Odell C."/>
            <person name="Oliver K."/>
            <person name="Rajandream M.A."/>
            <person name="Richards C."/>
            <person name="Shore L."/>
            <person name="Walsh S.V."/>
            <person name="Barrell B.G."/>
            <person name="Dietrich F.S."/>
            <person name="Mulligan J.T."/>
            <person name="Allen E."/>
            <person name="Araujo R."/>
            <person name="Aviles E."/>
            <person name="Berno A."/>
            <person name="Carpenter J."/>
            <person name="Chen E."/>
            <person name="Cherry J.M."/>
            <person name="Chung E."/>
            <person name="Duncan M."/>
            <person name="Hunicke-Smith S."/>
            <person name="Hyman R.W."/>
            <person name="Komp C."/>
            <person name="Lashkari D."/>
            <person name="Lew H."/>
            <person name="Lin D."/>
            <person name="Mosedale D."/>
            <person name="Nakahara K."/>
            <person name="Namath A."/>
            <person name="Oefner P."/>
            <person name="Oh C."/>
            <person name="Petel F.X."/>
            <person name="Roberts D."/>
            <person name="Schramm S."/>
            <person name="Schroeder M."/>
            <person name="Shogren T."/>
            <person name="Shroff N."/>
            <person name="Winant A."/>
            <person name="Yelton M.A."/>
            <person name="Botstein D."/>
            <person name="Davis R.W."/>
            <person name="Johnston M."/>
            <person name="Andrews S."/>
            <person name="Brinkman R."/>
            <person name="Cooper J."/>
            <person name="Ding H."/>
            <person name="Du Z."/>
            <person name="Favello A."/>
            <person name="Fulton L."/>
            <person name="Gattung S."/>
            <person name="Greco T."/>
            <person name="Hallsworth K."/>
            <person name="Hawkins J."/>
            <person name="Hillier L.W."/>
            <person name="Jier M."/>
            <person name="Johnson D."/>
            <person name="Johnston L."/>
            <person name="Kirsten J."/>
            <person name="Kucaba T."/>
            <person name="Langston Y."/>
            <person name="Latreille P."/>
            <person name="Le T."/>
            <person name="Mardis E."/>
            <person name="Menezes S."/>
            <person name="Miller N."/>
            <person name="Nhan M."/>
            <person name="Pauley A."/>
            <person name="Peluso D."/>
            <person name="Rifkin L."/>
            <person name="Riles L."/>
            <person name="Taich A."/>
            <person name="Trevaskis E."/>
            <person name="Vignati D."/>
            <person name="Wilcox L."/>
            <person name="Wohldman P."/>
            <person name="Vaudin M."/>
            <person name="Wilson R."/>
            <person name="Waterston R."/>
            <person name="Albermann K."/>
            <person name="Hani J."/>
            <person name="Heumann K."/>
            <person name="Kleine K."/>
            <person name="Mewes H.-W."/>
            <person name="Zollner A."/>
            <person name="Zaccaria P."/>
        </authorList>
    </citation>
    <scope>NUCLEOTIDE SEQUENCE [LARGE SCALE GENOMIC DNA]</scope>
    <source>
        <strain>ATCC 204508 / S288c</strain>
    </source>
</reference>
<reference key="2">
    <citation type="journal article" date="2014" name="G3 (Bethesda)">
        <title>The reference genome sequence of Saccharomyces cerevisiae: Then and now.</title>
        <authorList>
            <person name="Engel S.R."/>
            <person name="Dietrich F.S."/>
            <person name="Fisk D.G."/>
            <person name="Binkley G."/>
            <person name="Balakrishnan R."/>
            <person name="Costanzo M.C."/>
            <person name="Dwight S.S."/>
            <person name="Hitz B.C."/>
            <person name="Karra K."/>
            <person name="Nash R.S."/>
            <person name="Weng S."/>
            <person name="Wong E.D."/>
            <person name="Lloyd P."/>
            <person name="Skrzypek M.S."/>
            <person name="Miyasato S.R."/>
            <person name="Simison M."/>
            <person name="Cherry J.M."/>
        </authorList>
    </citation>
    <scope>GENOME REANNOTATION</scope>
    <source>
        <strain>ATCC 204508 / S288c</strain>
    </source>
</reference>
<sequence length="373" mass="43790">MGYILTGYSSRHDKRKKHALPLHRYASSSINLQHHVHLLETRVSSKRPISEDQRTIRLPAKKLRHHQKLTLQDLPVEIIQHIFVFTKGEPSMVTLNRFFYSCLKPSFSLLSKIMWEKYLFDPLEFGVSNIKAYSRNIVIPTLFEHETFFRLLLDHHPILLKNISHFLPRKHYQDMQNGDFDTSKELDLCSMNTEDTSKEDFPKNFYNNMHIFLTRRECVKSLGNHFTLKNPYDVISPFIEWFFQGIDMQGTDLSPKFTFVSLFESIDLILYVSGSTVQKLASIEPLTTVIFLLYFTYADSLGSLNFEFFLQNRSRLQLIEKFILKYYYNPSLTENELLSDSTIWDLLRRVSDLKLIDLVVKCGGRPQYGVMFA</sequence>
<protein>
    <recommendedName>
        <fullName>Uncharacterized protein YDR249C</fullName>
    </recommendedName>
</protein>